<gene>
    <name evidence="1" type="primary">NCS2</name>
    <name evidence="1" type="synonym">CTU2</name>
    <name type="ordered locus">YALI0B10263g</name>
</gene>
<dbReference type="EMBL" id="CR382128">
    <property type="protein sequence ID" value="CAG82957.1"/>
    <property type="molecule type" value="Genomic_DNA"/>
</dbReference>
<dbReference type="RefSeq" id="XP_500712.1">
    <property type="nucleotide sequence ID" value="XM_500712.1"/>
</dbReference>
<dbReference type="FunCoup" id="Q6CF50">
    <property type="interactions" value="184"/>
</dbReference>
<dbReference type="STRING" id="284591.Q6CF50"/>
<dbReference type="EnsemblFungi" id="CAG82957">
    <property type="protein sequence ID" value="CAG82957"/>
    <property type="gene ID" value="YALI0_B10263g"/>
</dbReference>
<dbReference type="KEGG" id="yli:2906688"/>
<dbReference type="VEuPathDB" id="FungiDB:YALI0_B10263g"/>
<dbReference type="HOGENOM" id="CLU_024534_1_0_1"/>
<dbReference type="InParanoid" id="Q6CF50"/>
<dbReference type="OMA" id="KQRKQMM"/>
<dbReference type="OrthoDB" id="97542at4891"/>
<dbReference type="UniPathway" id="UPA00988"/>
<dbReference type="Proteomes" id="UP000001300">
    <property type="component" value="Chromosome B"/>
</dbReference>
<dbReference type="GO" id="GO:0005829">
    <property type="term" value="C:cytosol"/>
    <property type="evidence" value="ECO:0000250"/>
    <property type="project" value="UniProtKB"/>
</dbReference>
<dbReference type="GO" id="GO:0016779">
    <property type="term" value="F:nucleotidyltransferase activity"/>
    <property type="evidence" value="ECO:0007669"/>
    <property type="project" value="UniProtKB-UniRule"/>
</dbReference>
<dbReference type="GO" id="GO:0016783">
    <property type="term" value="F:sulfurtransferase activity"/>
    <property type="evidence" value="ECO:0000318"/>
    <property type="project" value="GO_Central"/>
</dbReference>
<dbReference type="GO" id="GO:0000049">
    <property type="term" value="F:tRNA binding"/>
    <property type="evidence" value="ECO:0007669"/>
    <property type="project" value="InterPro"/>
</dbReference>
<dbReference type="GO" id="GO:0032447">
    <property type="term" value="P:protein urmylation"/>
    <property type="evidence" value="ECO:0007669"/>
    <property type="project" value="UniProtKB-UniRule"/>
</dbReference>
<dbReference type="GO" id="GO:0034227">
    <property type="term" value="P:tRNA thio-modification"/>
    <property type="evidence" value="ECO:0000250"/>
    <property type="project" value="UniProtKB"/>
</dbReference>
<dbReference type="GO" id="GO:0002143">
    <property type="term" value="P:tRNA wobble position uridine thiolation"/>
    <property type="evidence" value="ECO:0000318"/>
    <property type="project" value="GO_Central"/>
</dbReference>
<dbReference type="GO" id="GO:0002098">
    <property type="term" value="P:tRNA wobble uridine modification"/>
    <property type="evidence" value="ECO:0000250"/>
    <property type="project" value="UniProtKB"/>
</dbReference>
<dbReference type="Gene3D" id="3.40.50.620">
    <property type="entry name" value="HUPs"/>
    <property type="match status" value="1"/>
</dbReference>
<dbReference type="HAMAP" id="MF_03054">
    <property type="entry name" value="CTU2"/>
    <property type="match status" value="1"/>
</dbReference>
<dbReference type="InterPro" id="IPR019407">
    <property type="entry name" value="CTU2"/>
</dbReference>
<dbReference type="InterPro" id="IPR007110">
    <property type="entry name" value="Ig-like_dom"/>
</dbReference>
<dbReference type="InterPro" id="IPR014729">
    <property type="entry name" value="Rossmann-like_a/b/a_fold"/>
</dbReference>
<dbReference type="PANTHER" id="PTHR20882">
    <property type="entry name" value="CYTOPLASMIC TRNA 2-THIOLATION PROTEIN 2"/>
    <property type="match status" value="1"/>
</dbReference>
<dbReference type="PANTHER" id="PTHR20882:SF14">
    <property type="entry name" value="CYTOPLASMIC TRNA 2-THIOLATION PROTEIN 2"/>
    <property type="match status" value="1"/>
</dbReference>
<dbReference type="Pfam" id="PF10288">
    <property type="entry name" value="CTU2"/>
    <property type="match status" value="1"/>
</dbReference>
<keyword id="KW-0963">Cytoplasm</keyword>
<keyword id="KW-1185">Reference proteome</keyword>
<keyword id="KW-0819">tRNA processing</keyword>
<protein>
    <recommendedName>
        <fullName evidence="1">Cytoplasmic tRNA 2-thiolation protein 2</fullName>
    </recommendedName>
</protein>
<accession>Q6CF50</accession>
<feature type="chain" id="PRO_0000369305" description="Cytoplasmic tRNA 2-thiolation protein 2">
    <location>
        <begin position="1"/>
        <end position="424"/>
    </location>
</feature>
<feature type="region of interest" description="Disordered" evidence="2">
    <location>
        <begin position="357"/>
        <end position="385"/>
    </location>
</feature>
<feature type="compositionally biased region" description="Basic and acidic residues" evidence="2">
    <location>
        <begin position="368"/>
        <end position="385"/>
    </location>
</feature>
<evidence type="ECO:0000255" key="1">
    <source>
        <dbReference type="HAMAP-Rule" id="MF_03054"/>
    </source>
</evidence>
<evidence type="ECO:0000256" key="2">
    <source>
        <dbReference type="SAM" id="MobiDB-lite"/>
    </source>
</evidence>
<comment type="function">
    <text evidence="1">Plays a central role in 2-thiolation of mcm(5)S(2)U at tRNA wobble positions of tRNA(Lys), tRNA(Glu) and tRNA(Gln). May act by forming a heterodimer with NCS6 that ligates sulfur from thiocarboxylated URM1 onto the uridine of tRNAs at wobble position. Prior mcm(5) tRNA modification by the elongator complex is required for 2-thiolation. May also be involved in protein urmylation.</text>
</comment>
<comment type="pathway">
    <text evidence="1">tRNA modification; 5-methoxycarbonylmethyl-2-thiouridine-tRNA biosynthesis.</text>
</comment>
<comment type="subcellular location">
    <subcellularLocation>
        <location evidence="1">Cytoplasm</location>
    </subcellularLocation>
</comment>
<comment type="similarity">
    <text evidence="1">Belongs to the CTU2/NCS2 family.</text>
</comment>
<reference key="1">
    <citation type="journal article" date="2004" name="Nature">
        <title>Genome evolution in yeasts.</title>
        <authorList>
            <person name="Dujon B."/>
            <person name="Sherman D."/>
            <person name="Fischer G."/>
            <person name="Durrens P."/>
            <person name="Casaregola S."/>
            <person name="Lafontaine I."/>
            <person name="de Montigny J."/>
            <person name="Marck C."/>
            <person name="Neuveglise C."/>
            <person name="Talla E."/>
            <person name="Goffard N."/>
            <person name="Frangeul L."/>
            <person name="Aigle M."/>
            <person name="Anthouard V."/>
            <person name="Babour A."/>
            <person name="Barbe V."/>
            <person name="Barnay S."/>
            <person name="Blanchin S."/>
            <person name="Beckerich J.-M."/>
            <person name="Beyne E."/>
            <person name="Bleykasten C."/>
            <person name="Boisrame A."/>
            <person name="Boyer J."/>
            <person name="Cattolico L."/>
            <person name="Confanioleri F."/>
            <person name="de Daruvar A."/>
            <person name="Despons L."/>
            <person name="Fabre E."/>
            <person name="Fairhead C."/>
            <person name="Ferry-Dumazet H."/>
            <person name="Groppi A."/>
            <person name="Hantraye F."/>
            <person name="Hennequin C."/>
            <person name="Jauniaux N."/>
            <person name="Joyet P."/>
            <person name="Kachouri R."/>
            <person name="Kerrest A."/>
            <person name="Koszul R."/>
            <person name="Lemaire M."/>
            <person name="Lesur I."/>
            <person name="Ma L."/>
            <person name="Muller H."/>
            <person name="Nicaud J.-M."/>
            <person name="Nikolski M."/>
            <person name="Oztas S."/>
            <person name="Ozier-Kalogeropoulos O."/>
            <person name="Pellenz S."/>
            <person name="Potier S."/>
            <person name="Richard G.-F."/>
            <person name="Straub M.-L."/>
            <person name="Suleau A."/>
            <person name="Swennen D."/>
            <person name="Tekaia F."/>
            <person name="Wesolowski-Louvel M."/>
            <person name="Westhof E."/>
            <person name="Wirth B."/>
            <person name="Zeniou-Meyer M."/>
            <person name="Zivanovic Y."/>
            <person name="Bolotin-Fukuhara M."/>
            <person name="Thierry A."/>
            <person name="Bouchier C."/>
            <person name="Caudron B."/>
            <person name="Scarpelli C."/>
            <person name="Gaillardin C."/>
            <person name="Weissenbach J."/>
            <person name="Wincker P."/>
            <person name="Souciet J.-L."/>
        </authorList>
    </citation>
    <scope>NUCLEOTIDE SEQUENCE [LARGE SCALE GENOMIC DNA]</scope>
    <source>
        <strain>CLIB 122 / E 150</strain>
    </source>
</reference>
<organism>
    <name type="scientific">Yarrowia lipolytica (strain CLIB 122 / E 150)</name>
    <name type="common">Yeast</name>
    <name type="synonym">Candida lipolytica</name>
    <dbReference type="NCBI Taxonomy" id="284591"/>
    <lineage>
        <taxon>Eukaryota</taxon>
        <taxon>Fungi</taxon>
        <taxon>Dikarya</taxon>
        <taxon>Ascomycota</taxon>
        <taxon>Saccharomycotina</taxon>
        <taxon>Dipodascomycetes</taxon>
        <taxon>Dipodascales</taxon>
        <taxon>Dipodascales incertae sedis</taxon>
        <taxon>Yarrowia</taxon>
    </lineage>
</organism>
<sequence>MSAESTCRRCDGPTAIKTRQANFCQPCFITFIQQKQRKAMEGCKVLFARPGCVLPPAINILVPISFGQSSLALLDMAHAQLEEQAKTYENAAGFTLNAVFIDCSEADPLEKEPNQIISELEKRFAHAKFTCIPLSKAFEGASSVTLKHNRDYTSFVSGISEEPTSVQQLLSCIGTKSAREDIISVLQRHLIIEEAKKQNESLPTTVAWGHNATRLAELTLSLTIKGRGNRIHAQVLEHKNPKDSISGLPEIHPLNDVLSYEIPFYNSFRNVSDLAVDTVSKPSQVTKNLSIDQLMHQYFENIQTNFPSIASTVVRTAAKLDDPNAAKQGLTPCLICASPVDPNQSLAWLTNITVNEPAAPETEEEEELSKKAHMEKSQEKTGDADRHLPVPNLCYGCIITIRDTDSFTFPKRASKQDILDEFTL</sequence>
<name>CTU2_YARLI</name>
<proteinExistence type="inferred from homology"/>